<proteinExistence type="inferred from homology"/>
<organism>
    <name type="scientific">Borreliella afzelii (strain PKo)</name>
    <name type="common">Borrelia afzelii</name>
    <dbReference type="NCBI Taxonomy" id="390236"/>
    <lineage>
        <taxon>Bacteria</taxon>
        <taxon>Pseudomonadati</taxon>
        <taxon>Spirochaetota</taxon>
        <taxon>Spirochaetia</taxon>
        <taxon>Spirochaetales</taxon>
        <taxon>Borreliaceae</taxon>
        <taxon>Borreliella</taxon>
    </lineage>
</organism>
<feature type="chain" id="PRO_1000070265" description="Ribonuclease Z">
    <location>
        <begin position="1"/>
        <end position="319"/>
    </location>
</feature>
<feature type="active site" description="Proton acceptor" evidence="1">
    <location>
        <position position="66"/>
    </location>
</feature>
<feature type="binding site" evidence="1">
    <location>
        <position position="62"/>
    </location>
    <ligand>
        <name>Zn(2+)</name>
        <dbReference type="ChEBI" id="CHEBI:29105"/>
        <label>1</label>
        <note>catalytic</note>
    </ligand>
</feature>
<feature type="binding site" evidence="1">
    <location>
        <position position="64"/>
    </location>
    <ligand>
        <name>Zn(2+)</name>
        <dbReference type="ChEBI" id="CHEBI:29105"/>
        <label>1</label>
        <note>catalytic</note>
    </ligand>
</feature>
<feature type="binding site" evidence="1">
    <location>
        <position position="66"/>
    </location>
    <ligand>
        <name>Zn(2+)</name>
        <dbReference type="ChEBI" id="CHEBI:29105"/>
        <label>2</label>
        <note>catalytic</note>
    </ligand>
</feature>
<feature type="binding site" evidence="1">
    <location>
        <position position="67"/>
    </location>
    <ligand>
        <name>Zn(2+)</name>
        <dbReference type="ChEBI" id="CHEBI:29105"/>
        <label>2</label>
        <note>catalytic</note>
    </ligand>
</feature>
<feature type="binding site" evidence="1">
    <location>
        <position position="145"/>
    </location>
    <ligand>
        <name>Zn(2+)</name>
        <dbReference type="ChEBI" id="CHEBI:29105"/>
        <label>1</label>
        <note>catalytic</note>
    </ligand>
</feature>
<feature type="binding site" evidence="1">
    <location>
        <position position="215"/>
    </location>
    <ligand>
        <name>Zn(2+)</name>
        <dbReference type="ChEBI" id="CHEBI:29105"/>
        <label>1</label>
        <note>catalytic</note>
    </ligand>
</feature>
<feature type="binding site" evidence="1">
    <location>
        <position position="215"/>
    </location>
    <ligand>
        <name>Zn(2+)</name>
        <dbReference type="ChEBI" id="CHEBI:29105"/>
        <label>2</label>
        <note>catalytic</note>
    </ligand>
</feature>
<feature type="binding site" evidence="1">
    <location>
        <position position="273"/>
    </location>
    <ligand>
        <name>Zn(2+)</name>
        <dbReference type="ChEBI" id="CHEBI:29105"/>
        <label>2</label>
        <note>catalytic</note>
    </ligand>
</feature>
<gene>
    <name evidence="1" type="primary">rnz</name>
    <name type="ordered locus">BAPKO_0800</name>
    <name type="ordered locus">BafPKo_0780</name>
</gene>
<comment type="function">
    <text evidence="1">Zinc phosphodiesterase, which displays some tRNA 3'-processing endonuclease activity. Probably involved in tRNA maturation, by removing a 3'-trailer from precursor tRNA.</text>
</comment>
<comment type="catalytic activity">
    <reaction evidence="1">
        <text>Endonucleolytic cleavage of RNA, removing extra 3' nucleotides from tRNA precursor, generating 3' termini of tRNAs. A 3'-hydroxy group is left at the tRNA terminus and a 5'-phosphoryl group is left at the trailer molecule.</text>
        <dbReference type="EC" id="3.1.26.11"/>
    </reaction>
</comment>
<comment type="cofactor">
    <cofactor evidence="1">
        <name>Zn(2+)</name>
        <dbReference type="ChEBI" id="CHEBI:29105"/>
    </cofactor>
    <text evidence="1">Binds 2 Zn(2+) ions.</text>
</comment>
<comment type="subunit">
    <text evidence="1">Homodimer.</text>
</comment>
<comment type="similarity">
    <text evidence="1">Belongs to the RNase Z family.</text>
</comment>
<evidence type="ECO:0000255" key="1">
    <source>
        <dbReference type="HAMAP-Rule" id="MF_01818"/>
    </source>
</evidence>
<accession>Q0SMA2</accession>
<accession>G0IRT6</accession>
<name>RNZ_BORAP</name>
<protein>
    <recommendedName>
        <fullName evidence="1">Ribonuclease Z</fullName>
        <shortName evidence="1">RNase Z</shortName>
        <ecNumber evidence="1">3.1.26.11</ecNumber>
    </recommendedName>
    <alternativeName>
        <fullName evidence="1">tRNA 3 endonuclease</fullName>
    </alternativeName>
    <alternativeName>
        <fullName evidence="1">tRNase Z</fullName>
    </alternativeName>
</protein>
<dbReference type="EC" id="3.1.26.11" evidence="1"/>
<dbReference type="EMBL" id="CP000395">
    <property type="protein sequence ID" value="ABH02026.1"/>
    <property type="molecule type" value="Genomic_DNA"/>
</dbReference>
<dbReference type="EMBL" id="CP002933">
    <property type="protein sequence ID" value="AEL69971.1"/>
    <property type="molecule type" value="Genomic_DNA"/>
</dbReference>
<dbReference type="RefSeq" id="WP_004789535.1">
    <property type="nucleotide sequence ID" value="NZ_CP160066.1"/>
</dbReference>
<dbReference type="SMR" id="Q0SMA2"/>
<dbReference type="STRING" id="29518.BLA32_00455"/>
<dbReference type="KEGG" id="baf:BAPKO_0800"/>
<dbReference type="KEGG" id="bafz:BafPKo_0780"/>
<dbReference type="PATRIC" id="fig|390236.22.peg.744"/>
<dbReference type="eggNOG" id="COG1234">
    <property type="taxonomic scope" value="Bacteria"/>
</dbReference>
<dbReference type="HOGENOM" id="CLU_031317_2_1_12"/>
<dbReference type="OrthoDB" id="9800940at2"/>
<dbReference type="Proteomes" id="UP000005216">
    <property type="component" value="Chromosome"/>
</dbReference>
<dbReference type="GO" id="GO:0042781">
    <property type="term" value="F:3'-tRNA processing endoribonuclease activity"/>
    <property type="evidence" value="ECO:0007669"/>
    <property type="project" value="UniProtKB-UniRule"/>
</dbReference>
<dbReference type="GO" id="GO:0008270">
    <property type="term" value="F:zinc ion binding"/>
    <property type="evidence" value="ECO:0007669"/>
    <property type="project" value="UniProtKB-UniRule"/>
</dbReference>
<dbReference type="CDD" id="cd07717">
    <property type="entry name" value="RNaseZ_ZiPD-like_MBL-fold"/>
    <property type="match status" value="1"/>
</dbReference>
<dbReference type="Gene3D" id="3.60.15.10">
    <property type="entry name" value="Ribonuclease Z/Hydroxyacylglutathione hydrolase-like"/>
    <property type="match status" value="1"/>
</dbReference>
<dbReference type="HAMAP" id="MF_01818">
    <property type="entry name" value="RNase_Z_BN"/>
    <property type="match status" value="1"/>
</dbReference>
<dbReference type="InterPro" id="IPR001279">
    <property type="entry name" value="Metallo-B-lactamas"/>
</dbReference>
<dbReference type="InterPro" id="IPR036866">
    <property type="entry name" value="RibonucZ/Hydroxyglut_hydro"/>
</dbReference>
<dbReference type="InterPro" id="IPR013471">
    <property type="entry name" value="RNase_Z/BN"/>
</dbReference>
<dbReference type="NCBIfam" id="NF000801">
    <property type="entry name" value="PRK00055.1-3"/>
    <property type="match status" value="1"/>
</dbReference>
<dbReference type="NCBIfam" id="TIGR02651">
    <property type="entry name" value="RNase_Z"/>
    <property type="match status" value="1"/>
</dbReference>
<dbReference type="PANTHER" id="PTHR46018">
    <property type="entry name" value="ZINC PHOSPHODIESTERASE ELAC PROTEIN 1"/>
    <property type="match status" value="1"/>
</dbReference>
<dbReference type="PANTHER" id="PTHR46018:SF2">
    <property type="entry name" value="ZINC PHOSPHODIESTERASE ELAC PROTEIN 1"/>
    <property type="match status" value="1"/>
</dbReference>
<dbReference type="Pfam" id="PF00753">
    <property type="entry name" value="Lactamase_B"/>
    <property type="match status" value="1"/>
</dbReference>
<dbReference type="Pfam" id="PF12706">
    <property type="entry name" value="Lactamase_B_2"/>
    <property type="match status" value="1"/>
</dbReference>
<dbReference type="SMART" id="SM00849">
    <property type="entry name" value="Lactamase_B"/>
    <property type="match status" value="1"/>
</dbReference>
<dbReference type="SUPFAM" id="SSF56281">
    <property type="entry name" value="Metallo-hydrolase/oxidoreductase"/>
    <property type="match status" value="1"/>
</dbReference>
<reference key="1">
    <citation type="journal article" date="2006" name="BMC Genomics">
        <title>Comparative genome analysis: selection pressure on the Borrelia vls cassettes is essential for infectivity.</title>
        <authorList>
            <person name="Gloeckner G."/>
            <person name="Schulte-Spechtel U."/>
            <person name="Schilhabel M."/>
            <person name="Felder M."/>
            <person name="Suehnel J."/>
            <person name="Wilske B."/>
            <person name="Platzer M."/>
        </authorList>
    </citation>
    <scope>NUCLEOTIDE SEQUENCE [LARGE SCALE GENOMIC DNA]</scope>
    <source>
        <strain>PKo</strain>
    </source>
</reference>
<reference key="2">
    <citation type="journal article" date="2011" name="J. Bacteriol.">
        <title>Whole-genome sequences of two Borrelia afzelii and two Borrelia garinii Lyme disease agent isolates.</title>
        <authorList>
            <person name="Casjens S.R."/>
            <person name="Mongodin E.F."/>
            <person name="Qiu W.G."/>
            <person name="Dunn J.J."/>
            <person name="Luft B.J."/>
            <person name="Fraser-Liggett C.M."/>
            <person name="Schutzer S.E."/>
        </authorList>
    </citation>
    <scope>NUCLEOTIDE SEQUENCE [LARGE SCALE GENOMIC DNA]</scope>
    <source>
        <strain>PKo</strain>
    </source>
</reference>
<sequence>MGFNINIIGTGGTRPLHNRYLSSVLIEYNGDNFLFDCGEGTQMSLRKQKISWQKIKMICITHLHADHITGLLGIVMLMSQSGETRKDPLIIAGPVGIKNYTKNNIDMLKIYTNYEIIYKEIIIDKTEKIIYEDKTKKIEYTRLKHSIECVGYLFIEKDKPGKFNTEKAEELNIPKGPIRKTLQDGKEILINGKIIKPSEILGKSKKGLKVAYITDTGYFKELIQQIKNFNLVIIESTFKNELKKEADKKLHLTAGGAANIVKQAKVLQTGLIHFSERYTLRKDLENLLKEAKLEYPDGEIFLTKDGMRLEANKNNFIIK</sequence>
<keyword id="KW-0255">Endonuclease</keyword>
<keyword id="KW-0378">Hydrolase</keyword>
<keyword id="KW-0479">Metal-binding</keyword>
<keyword id="KW-0540">Nuclease</keyword>
<keyword id="KW-0819">tRNA processing</keyword>
<keyword id="KW-0862">Zinc</keyword>